<dbReference type="EMBL" id="AAFW02000082">
    <property type="protein sequence ID" value="EDN62390.1"/>
    <property type="molecule type" value="Genomic_DNA"/>
</dbReference>
<dbReference type="GlyCosmos" id="A6ZT59">
    <property type="glycosylation" value="13 sites, No reported glycans"/>
</dbReference>
<dbReference type="HOGENOM" id="CLU_033723_0_0_1"/>
<dbReference type="Proteomes" id="UP000007060">
    <property type="component" value="Unassembled WGS sequence"/>
</dbReference>
<dbReference type="GO" id="GO:0016020">
    <property type="term" value="C:membrane"/>
    <property type="evidence" value="ECO:0007669"/>
    <property type="project" value="UniProtKB-SubCell"/>
</dbReference>
<dbReference type="InterPro" id="IPR051008">
    <property type="entry name" value="Telomere_Capping_Maintenance"/>
</dbReference>
<dbReference type="PANTHER" id="PTHR35518:SF2">
    <property type="entry name" value="MAINTENANCE OF TELOMERE CAPPING PROTEIN 6"/>
    <property type="match status" value="1"/>
</dbReference>
<dbReference type="PANTHER" id="PTHR35518">
    <property type="entry name" value="MAINTENANCE OF TELOMOERE CAPPING"/>
    <property type="match status" value="1"/>
</dbReference>
<dbReference type="Pfam" id="PF25506">
    <property type="entry name" value="TIM-barrel_MTC6"/>
    <property type="match status" value="1"/>
</dbReference>
<reference key="1">
    <citation type="journal article" date="2007" name="Proc. Natl. Acad. Sci. U.S.A.">
        <title>Genome sequencing and comparative analysis of Saccharomyces cerevisiae strain YJM789.</title>
        <authorList>
            <person name="Wei W."/>
            <person name="McCusker J.H."/>
            <person name="Hyman R.W."/>
            <person name="Jones T."/>
            <person name="Ning Y."/>
            <person name="Cao Z."/>
            <person name="Gu Z."/>
            <person name="Bruno D."/>
            <person name="Miranda M."/>
            <person name="Nguyen M."/>
            <person name="Wilhelmy J."/>
            <person name="Komp C."/>
            <person name="Tamse R."/>
            <person name="Wang X."/>
            <person name="Jia P."/>
            <person name="Luedi P."/>
            <person name="Oefner P.J."/>
            <person name="David L."/>
            <person name="Dietrich F.S."/>
            <person name="Li Y."/>
            <person name="Davis R.W."/>
            <person name="Steinmetz L.M."/>
        </authorList>
    </citation>
    <scope>NUCLEOTIDE SEQUENCE [LARGE SCALE GENOMIC DNA]</scope>
    <source>
        <strain>YJM789</strain>
    </source>
</reference>
<organism>
    <name type="scientific">Saccharomyces cerevisiae (strain YJM789)</name>
    <name type="common">Baker's yeast</name>
    <dbReference type="NCBI Taxonomy" id="307796"/>
    <lineage>
        <taxon>Eukaryota</taxon>
        <taxon>Fungi</taxon>
        <taxon>Dikarya</taxon>
        <taxon>Ascomycota</taxon>
        <taxon>Saccharomycotina</taxon>
        <taxon>Saccharomycetes</taxon>
        <taxon>Saccharomycetales</taxon>
        <taxon>Saccharomycetaceae</taxon>
        <taxon>Saccharomyces</taxon>
    </lineage>
</organism>
<accession>A6ZT59</accession>
<comment type="function">
    <text evidence="1">May be involved in telomere capping.</text>
</comment>
<comment type="subcellular location">
    <subcellularLocation>
        <location evidence="3">Membrane</location>
        <topology evidence="3">Single-pass type I membrane protein</topology>
    </subcellularLocation>
</comment>
<comment type="similarity">
    <text evidence="3">Belongs to the MTC6 family.</text>
</comment>
<name>MTC6_YEAS7</name>
<keyword id="KW-0325">Glycoprotein</keyword>
<keyword id="KW-0472">Membrane</keyword>
<keyword id="KW-0732">Signal</keyword>
<keyword id="KW-0812">Transmembrane</keyword>
<keyword id="KW-1133">Transmembrane helix</keyword>
<protein>
    <recommendedName>
        <fullName>Maintenance of telomere capping protein 6</fullName>
    </recommendedName>
</protein>
<evidence type="ECO:0000250" key="1"/>
<evidence type="ECO:0000255" key="2"/>
<evidence type="ECO:0000305" key="3"/>
<gene>
    <name type="primary">MTC6</name>
    <name type="ORF">SCY_2543</name>
</gene>
<proteinExistence type="inferred from homology"/>
<sequence length="526" mass="59818">MWILIYLFIIWSSLRTWVTAVDSTTTVGDDLNETVSASVWPTMSPQMTVAFRSQRDVMGNLTIDQLPYVGLNLRRVLLNNETSMVNEGNNTRLLTLFKSMLSSEANAFVLDLEQYNNDLRVVDTTLLFSDVLTALQSFIFSTQNNLYANIIVLLLNISAPELDSTEYRHQNQTLNTTYILDKNLGNSFIYKPTDLQSDRAKNNTWNIYGKSSIDGWPTLGSVLYEQKKRLVIGELTDFFNETTAPYIFPHDVFHYEQGNSTLDCPSTVEGLTDLSSIHWRFLDSLFNSVDIKEYISCGLSPIISNSAYVNNVTQLADIIHEGSVWSWDSDQPSVTQSTSKSGSSSGTLEAYNCVLLYYFANNETVTWRVGNCYNSNIGLCRYENMAFRWLVRSNKATYFDFDSYQGSKCPDQYSFNIPRSPLEQRSFIAYMRNSSFSDTQIWIDLNSISVSNCWVSGGPYASCPYEKVISRRNFVTMMVPASVCSFALLCIVVYLSVLRVPIYDNRKNWRRVINKISKSELEGVPS</sequence>
<feature type="signal peptide" evidence="2">
    <location>
        <begin position="1"/>
        <end position="20"/>
    </location>
</feature>
<feature type="chain" id="PRO_0000407788" description="Maintenance of telomere capping protein 6">
    <location>
        <begin position="21"/>
        <end position="526"/>
    </location>
</feature>
<feature type="topological domain" description="Extracellular" evidence="2">
    <location>
        <begin position="21"/>
        <end position="477"/>
    </location>
</feature>
<feature type="transmembrane region" description="Helical" evidence="2">
    <location>
        <begin position="478"/>
        <end position="498"/>
    </location>
</feature>
<feature type="topological domain" description="Cytoplasmic" evidence="2">
    <location>
        <begin position="499"/>
        <end position="526"/>
    </location>
</feature>
<feature type="glycosylation site" description="N-linked (GlcNAc...) asparagine" evidence="2">
    <location>
        <position position="32"/>
    </location>
</feature>
<feature type="glycosylation site" description="N-linked (GlcNAc...) asparagine" evidence="2">
    <location>
        <position position="60"/>
    </location>
</feature>
<feature type="glycosylation site" description="N-linked (GlcNAc...) asparagine" evidence="2">
    <location>
        <position position="80"/>
    </location>
</feature>
<feature type="glycosylation site" description="N-linked (GlcNAc...) asparagine" evidence="2">
    <location>
        <position position="89"/>
    </location>
</feature>
<feature type="glycosylation site" description="N-linked (GlcNAc...) asparagine" evidence="2">
    <location>
        <position position="156"/>
    </location>
</feature>
<feature type="glycosylation site" description="N-linked (GlcNAc...) asparagine" evidence="2">
    <location>
        <position position="171"/>
    </location>
</feature>
<feature type="glycosylation site" description="N-linked (GlcNAc...) asparagine" evidence="2">
    <location>
        <position position="175"/>
    </location>
</feature>
<feature type="glycosylation site" description="N-linked (GlcNAc...) asparagine" evidence="2">
    <location>
        <position position="202"/>
    </location>
</feature>
<feature type="glycosylation site" description="N-linked (GlcNAc...) asparagine" evidence="2">
    <location>
        <position position="240"/>
    </location>
</feature>
<feature type="glycosylation site" description="N-linked (GlcNAc...) asparagine" evidence="2">
    <location>
        <position position="259"/>
    </location>
</feature>
<feature type="glycosylation site" description="N-linked (GlcNAc...) asparagine" evidence="2">
    <location>
        <position position="311"/>
    </location>
</feature>
<feature type="glycosylation site" description="N-linked (GlcNAc...) asparagine" evidence="2">
    <location>
        <position position="362"/>
    </location>
</feature>
<feature type="glycosylation site" description="N-linked (GlcNAc...) asparagine" evidence="2">
    <location>
        <position position="433"/>
    </location>
</feature>